<sequence length="129" mass="14465">MARVKRALNAQKKRRTVLKASKGYRGQRSRLYRKAKEQQLHSLTYAYRDRRARKGEFRKLWISRINAAARANDITYNRLIQGLKAAGVEVDRKNLAELAVSDPAAFTALVDVARAALPEDVNAPSGEAA</sequence>
<reference key="1">
    <citation type="submission" date="2006-10" db="EMBL/GenBank/DDBJ databases">
        <authorList>
            <person name="Fleischmann R.D."/>
            <person name="Dodson R.J."/>
            <person name="Haft D.H."/>
            <person name="Merkel J.S."/>
            <person name="Nelson W.C."/>
            <person name="Fraser C.M."/>
        </authorList>
    </citation>
    <scope>NUCLEOTIDE SEQUENCE [LARGE SCALE GENOMIC DNA]</scope>
    <source>
        <strain>ATCC 700084 / mc(2)155</strain>
    </source>
</reference>
<reference key="2">
    <citation type="journal article" date="2007" name="Genome Biol.">
        <title>Interrupted coding sequences in Mycobacterium smegmatis: authentic mutations or sequencing errors?</title>
        <authorList>
            <person name="Deshayes C."/>
            <person name="Perrodou E."/>
            <person name="Gallien S."/>
            <person name="Euphrasie D."/>
            <person name="Schaeffer C."/>
            <person name="Van-Dorsselaer A."/>
            <person name="Poch O."/>
            <person name="Lecompte O."/>
            <person name="Reyrat J.-M."/>
        </authorList>
    </citation>
    <scope>NUCLEOTIDE SEQUENCE [LARGE SCALE GENOMIC DNA]</scope>
    <source>
        <strain>ATCC 700084 / mc(2)155</strain>
    </source>
</reference>
<reference key="3">
    <citation type="journal article" date="2009" name="Genome Res.">
        <title>Ortho-proteogenomics: multiple proteomes investigation through orthology and a new MS-based protocol.</title>
        <authorList>
            <person name="Gallien S."/>
            <person name="Perrodou E."/>
            <person name="Carapito C."/>
            <person name="Deshayes C."/>
            <person name="Reyrat J.-M."/>
            <person name="Van Dorsselaer A."/>
            <person name="Poch O."/>
            <person name="Schaeffer C."/>
            <person name="Lecompte O."/>
        </authorList>
    </citation>
    <scope>NUCLEOTIDE SEQUENCE [LARGE SCALE GENOMIC DNA]</scope>
    <scope>IDENTIFICATION BY MASS SPECTROMETRY [LARGE SCALE ANALYSIS]</scope>
    <source>
        <strain>ATCC 700084 / mc(2)155</strain>
    </source>
</reference>
<proteinExistence type="evidence at protein level"/>
<organism>
    <name type="scientific">Mycolicibacterium smegmatis (strain ATCC 700084 / mc(2)155)</name>
    <name type="common">Mycobacterium smegmatis</name>
    <dbReference type="NCBI Taxonomy" id="246196"/>
    <lineage>
        <taxon>Bacteria</taxon>
        <taxon>Bacillati</taxon>
        <taxon>Actinomycetota</taxon>
        <taxon>Actinomycetes</taxon>
        <taxon>Mycobacteriales</taxon>
        <taxon>Mycobacteriaceae</taxon>
        <taxon>Mycolicibacterium</taxon>
    </lineage>
</organism>
<protein>
    <recommendedName>
        <fullName evidence="1">Large ribosomal subunit protein bL20</fullName>
    </recommendedName>
    <alternativeName>
        <fullName evidence="2">50S ribosomal protein L20</fullName>
    </alternativeName>
</protein>
<dbReference type="EMBL" id="CP000480">
    <property type="protein sequence ID" value="ABK72978.1"/>
    <property type="molecule type" value="Genomic_DNA"/>
</dbReference>
<dbReference type="EMBL" id="CP001663">
    <property type="protein sequence ID" value="AFP40162.1"/>
    <property type="molecule type" value="Genomic_DNA"/>
</dbReference>
<dbReference type="RefSeq" id="WP_003895237.1">
    <property type="nucleotide sequence ID" value="NZ_SIJM01000005.1"/>
</dbReference>
<dbReference type="RefSeq" id="YP_888084.1">
    <property type="nucleotide sequence ID" value="NC_008596.1"/>
</dbReference>
<dbReference type="PDB" id="5O60">
    <property type="method" value="EM"/>
    <property type="resolution" value="3.20 A"/>
    <property type="chains" value="R=1-129"/>
</dbReference>
<dbReference type="PDB" id="5O61">
    <property type="method" value="EM"/>
    <property type="resolution" value="3.31 A"/>
    <property type="chains" value="R=1-129"/>
</dbReference>
<dbReference type="PDB" id="5XYM">
    <property type="method" value="EM"/>
    <property type="resolution" value="3.08 A"/>
    <property type="chains" value="Q=1-129"/>
</dbReference>
<dbReference type="PDB" id="5ZEB">
    <property type="method" value="EM"/>
    <property type="resolution" value="3.40 A"/>
    <property type="chains" value="R=1-129"/>
</dbReference>
<dbReference type="PDB" id="5ZEP">
    <property type="method" value="EM"/>
    <property type="resolution" value="3.40 A"/>
    <property type="chains" value="R=1-129"/>
</dbReference>
<dbReference type="PDB" id="5ZET">
    <property type="method" value="EM"/>
    <property type="resolution" value="3.20 A"/>
    <property type="chains" value="R=1-129"/>
</dbReference>
<dbReference type="PDB" id="6DZI">
    <property type="method" value="EM"/>
    <property type="resolution" value="3.46 A"/>
    <property type="chains" value="R=2-125"/>
</dbReference>
<dbReference type="PDB" id="6DZP">
    <property type="method" value="EM"/>
    <property type="resolution" value="3.42 A"/>
    <property type="chains" value="R=1-129"/>
</dbReference>
<dbReference type="PDB" id="7S0S">
    <property type="method" value="EM"/>
    <property type="resolution" value="3.05 A"/>
    <property type="chains" value="S=2-125"/>
</dbReference>
<dbReference type="PDB" id="7XAM">
    <property type="method" value="EM"/>
    <property type="resolution" value="2.80 A"/>
    <property type="chains" value="R=1-129"/>
</dbReference>
<dbReference type="PDB" id="7Y41">
    <property type="method" value="EM"/>
    <property type="resolution" value="4.10 A"/>
    <property type="chains" value="R=1-129"/>
</dbReference>
<dbReference type="PDB" id="8FR8">
    <property type="method" value="EM"/>
    <property type="resolution" value="2.76 A"/>
    <property type="chains" value="W=2-125"/>
</dbReference>
<dbReference type="PDB" id="8KAB">
    <property type="method" value="EM"/>
    <property type="resolution" value="3.30 A"/>
    <property type="chains" value="R=1-129"/>
</dbReference>
<dbReference type="PDB" id="8V9J">
    <property type="method" value="EM"/>
    <property type="resolution" value="3.10 A"/>
    <property type="chains" value="S=1-129"/>
</dbReference>
<dbReference type="PDB" id="8V9K">
    <property type="method" value="EM"/>
    <property type="resolution" value="3.10 A"/>
    <property type="chains" value="S=1-129"/>
</dbReference>
<dbReference type="PDB" id="8V9L">
    <property type="method" value="EM"/>
    <property type="resolution" value="3.00 A"/>
    <property type="chains" value="S=1-129"/>
</dbReference>
<dbReference type="PDB" id="8VIO">
    <property type="method" value="EM"/>
    <property type="resolution" value="3.26 A"/>
    <property type="chains" value="R=1-129"/>
</dbReference>
<dbReference type="PDB" id="8VK0">
    <property type="method" value="EM"/>
    <property type="resolution" value="3.14 A"/>
    <property type="chains" value="R=1-129"/>
</dbReference>
<dbReference type="PDB" id="8VK7">
    <property type="method" value="EM"/>
    <property type="resolution" value="3.09 A"/>
    <property type="chains" value="R=1-129"/>
</dbReference>
<dbReference type="PDB" id="8VKI">
    <property type="method" value="EM"/>
    <property type="resolution" value="2.96 A"/>
    <property type="chains" value="R=1-129"/>
</dbReference>
<dbReference type="PDB" id="8VKW">
    <property type="method" value="EM"/>
    <property type="resolution" value="3.44 A"/>
    <property type="chains" value="R=1-129"/>
</dbReference>
<dbReference type="PDB" id="8VR4">
    <property type="method" value="EM"/>
    <property type="resolution" value="2.80 A"/>
    <property type="chains" value="R=1-129"/>
</dbReference>
<dbReference type="PDB" id="8VR8">
    <property type="method" value="EM"/>
    <property type="resolution" value="3.25 A"/>
    <property type="chains" value="R=1-129"/>
</dbReference>
<dbReference type="PDB" id="8VRL">
    <property type="method" value="EM"/>
    <property type="resolution" value="3.33 A"/>
    <property type="chains" value="R=1-129"/>
</dbReference>
<dbReference type="PDB" id="8WHX">
    <property type="method" value="EM"/>
    <property type="resolution" value="2.80 A"/>
    <property type="chains" value="T=1-129"/>
</dbReference>
<dbReference type="PDB" id="8WHY">
    <property type="method" value="EM"/>
    <property type="resolution" value="2.70 A"/>
    <property type="chains" value="T=1-129"/>
</dbReference>
<dbReference type="PDB" id="8WI7">
    <property type="method" value="EM"/>
    <property type="resolution" value="3.50 A"/>
    <property type="chains" value="T=1-129"/>
</dbReference>
<dbReference type="PDB" id="8WI8">
    <property type="method" value="EM"/>
    <property type="resolution" value="2.70 A"/>
    <property type="chains" value="T=1-129"/>
</dbReference>
<dbReference type="PDB" id="8WIB">
    <property type="method" value="EM"/>
    <property type="resolution" value="3.50 A"/>
    <property type="chains" value="T=1-129"/>
</dbReference>
<dbReference type="PDB" id="8WIC">
    <property type="method" value="EM"/>
    <property type="resolution" value="3.50 A"/>
    <property type="chains" value="T=1-129"/>
</dbReference>
<dbReference type="PDB" id="8XZ3">
    <property type="method" value="EM"/>
    <property type="resolution" value="3.60 A"/>
    <property type="chains" value="R=2-125"/>
</dbReference>
<dbReference type="PDBsum" id="5O60"/>
<dbReference type="PDBsum" id="5O61"/>
<dbReference type="PDBsum" id="5XYM"/>
<dbReference type="PDBsum" id="5ZEB"/>
<dbReference type="PDBsum" id="5ZEP"/>
<dbReference type="PDBsum" id="5ZET"/>
<dbReference type="PDBsum" id="6DZI"/>
<dbReference type="PDBsum" id="6DZP"/>
<dbReference type="PDBsum" id="7S0S"/>
<dbReference type="PDBsum" id="7XAM"/>
<dbReference type="PDBsum" id="7Y41"/>
<dbReference type="PDBsum" id="8FR8"/>
<dbReference type="PDBsum" id="8KAB"/>
<dbReference type="PDBsum" id="8V9J"/>
<dbReference type="PDBsum" id="8V9K"/>
<dbReference type="PDBsum" id="8V9L"/>
<dbReference type="PDBsum" id="8VIO"/>
<dbReference type="PDBsum" id="8VK0"/>
<dbReference type="PDBsum" id="8VK7"/>
<dbReference type="PDBsum" id="8VKI"/>
<dbReference type="PDBsum" id="8VKW"/>
<dbReference type="PDBsum" id="8VR4"/>
<dbReference type="PDBsum" id="8VR8"/>
<dbReference type="PDBsum" id="8VRL"/>
<dbReference type="PDBsum" id="8WHX"/>
<dbReference type="PDBsum" id="8WHY"/>
<dbReference type="PDBsum" id="8WI7"/>
<dbReference type="PDBsum" id="8WI8"/>
<dbReference type="PDBsum" id="8WIB"/>
<dbReference type="PDBsum" id="8WIC"/>
<dbReference type="PDBsum" id="8XZ3"/>
<dbReference type="EMDB" id="EMD-29397"/>
<dbReference type="EMDB" id="EMD-33096"/>
<dbReference type="EMDB" id="EMD-33599"/>
<dbReference type="EMDB" id="EMD-37007"/>
<dbReference type="EMDB" id="EMD-3750"/>
<dbReference type="EMDB" id="EMD-3751"/>
<dbReference type="EMDB" id="EMD-37551"/>
<dbReference type="EMDB" id="EMD-37552"/>
<dbReference type="EMDB" id="EMD-37559"/>
<dbReference type="EMDB" id="EMD-37560"/>
<dbReference type="EMDB" id="EMD-37562"/>
<dbReference type="EMDB" id="EMD-37563"/>
<dbReference type="EMDB" id="EMD-38788"/>
<dbReference type="EMDB" id="EMD-43074"/>
<dbReference type="EMDB" id="EMD-43075"/>
<dbReference type="EMDB" id="EMD-43076"/>
<dbReference type="EMDB" id="EMD-43267"/>
<dbReference type="EMDB" id="EMD-43294"/>
<dbReference type="EMDB" id="EMD-43305"/>
<dbReference type="EMDB" id="EMD-43317"/>
<dbReference type="EMDB" id="EMD-43333"/>
<dbReference type="EMDB" id="EMD-43476"/>
<dbReference type="EMDB" id="EMD-43477"/>
<dbReference type="EMDB" id="EMD-43484"/>
<dbReference type="EMDB" id="EMD-6789"/>
<dbReference type="EMDB" id="EMD-6920"/>
<dbReference type="EMDB" id="EMD-6921"/>
<dbReference type="EMDB" id="EMD-6922"/>
<dbReference type="EMDB" id="EMD-8932"/>
<dbReference type="EMDB" id="EMD-8937"/>
<dbReference type="SMR" id="A0QYU6"/>
<dbReference type="IntAct" id="A0QYU6">
    <property type="interactions" value="2"/>
</dbReference>
<dbReference type="STRING" id="246196.MSMEG_3791"/>
<dbReference type="PaxDb" id="246196-MSMEI_3703"/>
<dbReference type="GeneID" id="93458533"/>
<dbReference type="KEGG" id="msb:LJ00_18835"/>
<dbReference type="KEGG" id="msg:MSMEI_3703"/>
<dbReference type="KEGG" id="msm:MSMEG_3791"/>
<dbReference type="PATRIC" id="fig|246196.19.peg.3730"/>
<dbReference type="eggNOG" id="COG0292">
    <property type="taxonomic scope" value="Bacteria"/>
</dbReference>
<dbReference type="OrthoDB" id="9808966at2"/>
<dbReference type="Proteomes" id="UP000000757">
    <property type="component" value="Chromosome"/>
</dbReference>
<dbReference type="Proteomes" id="UP000006158">
    <property type="component" value="Chromosome"/>
</dbReference>
<dbReference type="GO" id="GO:1990904">
    <property type="term" value="C:ribonucleoprotein complex"/>
    <property type="evidence" value="ECO:0007669"/>
    <property type="project" value="UniProtKB-KW"/>
</dbReference>
<dbReference type="GO" id="GO:0005840">
    <property type="term" value="C:ribosome"/>
    <property type="evidence" value="ECO:0007669"/>
    <property type="project" value="UniProtKB-KW"/>
</dbReference>
<dbReference type="GO" id="GO:0019843">
    <property type="term" value="F:rRNA binding"/>
    <property type="evidence" value="ECO:0007669"/>
    <property type="project" value="UniProtKB-UniRule"/>
</dbReference>
<dbReference type="GO" id="GO:0003735">
    <property type="term" value="F:structural constituent of ribosome"/>
    <property type="evidence" value="ECO:0007669"/>
    <property type="project" value="InterPro"/>
</dbReference>
<dbReference type="GO" id="GO:0000027">
    <property type="term" value="P:ribosomal large subunit assembly"/>
    <property type="evidence" value="ECO:0007669"/>
    <property type="project" value="UniProtKB-UniRule"/>
</dbReference>
<dbReference type="GO" id="GO:0006412">
    <property type="term" value="P:translation"/>
    <property type="evidence" value="ECO:0007669"/>
    <property type="project" value="InterPro"/>
</dbReference>
<dbReference type="CDD" id="cd07026">
    <property type="entry name" value="Ribosomal_L20"/>
    <property type="match status" value="1"/>
</dbReference>
<dbReference type="FunFam" id="1.10.1900.20:FF:000001">
    <property type="entry name" value="50S ribosomal protein L20"/>
    <property type="match status" value="1"/>
</dbReference>
<dbReference type="Gene3D" id="6.10.160.10">
    <property type="match status" value="1"/>
</dbReference>
<dbReference type="Gene3D" id="1.10.1900.20">
    <property type="entry name" value="Ribosomal protein L20"/>
    <property type="match status" value="1"/>
</dbReference>
<dbReference type="HAMAP" id="MF_00382">
    <property type="entry name" value="Ribosomal_bL20"/>
    <property type="match status" value="1"/>
</dbReference>
<dbReference type="InterPro" id="IPR005813">
    <property type="entry name" value="Ribosomal_bL20"/>
</dbReference>
<dbReference type="InterPro" id="IPR049946">
    <property type="entry name" value="RIBOSOMAL_L20_CS"/>
</dbReference>
<dbReference type="InterPro" id="IPR035566">
    <property type="entry name" value="Ribosomal_protein_bL20_C"/>
</dbReference>
<dbReference type="NCBIfam" id="TIGR01032">
    <property type="entry name" value="rplT_bact"/>
    <property type="match status" value="1"/>
</dbReference>
<dbReference type="PANTHER" id="PTHR10986">
    <property type="entry name" value="39S RIBOSOMAL PROTEIN L20"/>
    <property type="match status" value="1"/>
</dbReference>
<dbReference type="Pfam" id="PF00453">
    <property type="entry name" value="Ribosomal_L20"/>
    <property type="match status" value="1"/>
</dbReference>
<dbReference type="PRINTS" id="PR00062">
    <property type="entry name" value="RIBOSOMALL20"/>
</dbReference>
<dbReference type="SUPFAM" id="SSF74731">
    <property type="entry name" value="Ribosomal protein L20"/>
    <property type="match status" value="1"/>
</dbReference>
<dbReference type="PROSITE" id="PS00937">
    <property type="entry name" value="RIBOSOMAL_L20"/>
    <property type="match status" value="1"/>
</dbReference>
<feature type="chain" id="PRO_1000049012" description="Large ribosomal subunit protein bL20">
    <location>
        <begin position="1"/>
        <end position="129"/>
    </location>
</feature>
<feature type="helix" evidence="3">
    <location>
        <begin position="11"/>
        <end position="20"/>
    </location>
</feature>
<feature type="turn" evidence="3">
    <location>
        <begin position="21"/>
        <end position="23"/>
    </location>
</feature>
<feature type="helix" evidence="3">
    <location>
        <begin position="27"/>
        <end position="30"/>
    </location>
</feature>
<feature type="helix" evidence="3">
    <location>
        <begin position="32"/>
        <end position="71"/>
    </location>
</feature>
<feature type="helix" evidence="3">
    <location>
        <begin position="76"/>
        <end position="86"/>
    </location>
</feature>
<feature type="helix" evidence="3">
    <location>
        <begin position="92"/>
        <end position="101"/>
    </location>
</feature>
<feature type="helix" evidence="3">
    <location>
        <begin position="106"/>
        <end position="115"/>
    </location>
</feature>
<keyword id="KW-0002">3D-structure</keyword>
<keyword id="KW-1185">Reference proteome</keyword>
<keyword id="KW-0687">Ribonucleoprotein</keyword>
<keyword id="KW-0689">Ribosomal protein</keyword>
<keyword id="KW-0694">RNA-binding</keyword>
<keyword id="KW-0699">rRNA-binding</keyword>
<name>RL20_MYCS2</name>
<gene>
    <name evidence="1" type="primary">rplT</name>
    <name type="ordered locus">MSMEG_3791</name>
    <name type="ordered locus">MSMEI_3703</name>
</gene>
<comment type="function">
    <text evidence="1">Binds directly to 23S ribosomal RNA and is necessary for the in vitro assembly process of the 50S ribosomal subunit. It is not involved in the protein synthesizing functions of that subunit.</text>
</comment>
<comment type="similarity">
    <text evidence="1">Belongs to the bacterial ribosomal protein bL20 family.</text>
</comment>
<accession>A0QYU6</accession>
<accession>I7G3M2</accession>
<evidence type="ECO:0000255" key="1">
    <source>
        <dbReference type="HAMAP-Rule" id="MF_00382"/>
    </source>
</evidence>
<evidence type="ECO:0000305" key="2"/>
<evidence type="ECO:0007829" key="3">
    <source>
        <dbReference type="PDB" id="5XYM"/>
    </source>
</evidence>